<evidence type="ECO:0000250" key="1">
    <source>
        <dbReference type="UniProtKB" id="A4Z6H1"/>
    </source>
</evidence>
<evidence type="ECO:0000250" key="2">
    <source>
        <dbReference type="UniProtKB" id="P46664"/>
    </source>
</evidence>
<evidence type="ECO:0000255" key="3">
    <source>
        <dbReference type="HAMAP-Rule" id="MF_03127"/>
    </source>
</evidence>
<protein>
    <recommendedName>
        <fullName evidence="3">Adenylosuccinate synthetase isozyme 2</fullName>
        <shortName evidence="3">AMPSase 2</shortName>
        <shortName evidence="3">AdSS 2</shortName>
        <ecNumber evidence="3">6.3.4.4</ecNumber>
    </recommendedName>
    <alternativeName>
        <fullName evidence="3">Adenylosuccinate synthetase, acidic isozyme</fullName>
    </alternativeName>
    <alternativeName>
        <fullName evidence="3">Adenylosuccinate synthetase, liver isozyme</fullName>
        <shortName evidence="3">L-type adenylosuccinate synthetase</shortName>
    </alternativeName>
    <alternativeName>
        <fullName evidence="3">IMP--aspartate ligase 2</fullName>
    </alternativeName>
</protein>
<sequence length="457" mass="50080">MSAENESPGLPNGGACCASATGHFLLVGNKVTVVLGAQWGDEGKGKVVDLLAQDADIVCRCQGGNNAGHTVVVDSVEYDFHLLPSGIINQNAIAFIGNGVVIHLPGLFEEAEKNLKKGQGLAGWEKRLCISDRAHIVFDFHQAADGIQEQQRQEQAGKNLGTTKKGIGPVYSSKAARSGLRMCDLVSDFNEFSQRFKLLAKQYKSMYPSLEIDIDGELKKLQDYADRVKPMVKDGVYYIYEALHGPPKKILVEGANAALLDIDFGTYPFVTSSNCTVGGVCTGLGIPPQSIGDVYGVVKAYTTRVGIGAFPTEQNNDIGEMLQTRGHEYGVTTGRKRRCGWLDLVLLRYAHMINGFTALALTKLDILDVFSEIKVGVSYKIDGKNIPHFPANQEVLNKVEVEYETLPGWNKDTSNVRTFEELPENAKKYVQFIKEELGIPIKWIGVGKSRESMIQLF</sequence>
<feature type="chain" id="PRO_0000398885" description="Adenylosuccinate synthetase isozyme 2">
    <location>
        <begin position="1"/>
        <end position="457"/>
    </location>
</feature>
<feature type="active site" description="Proton acceptor" evidence="3">
    <location>
        <position position="41"/>
    </location>
</feature>
<feature type="active site" description="Proton donor" evidence="3">
    <location>
        <position position="69"/>
    </location>
</feature>
<feature type="binding site" evidence="3">
    <location>
        <begin position="40"/>
        <end position="46"/>
    </location>
    <ligand>
        <name>GTP</name>
        <dbReference type="ChEBI" id="CHEBI:37565"/>
    </ligand>
</feature>
<feature type="binding site" description="in other chain" evidence="3">
    <location>
        <begin position="41"/>
        <end position="44"/>
    </location>
    <ligand>
        <name>IMP</name>
        <dbReference type="ChEBI" id="CHEBI:58053"/>
        <note>ligand shared between dimeric partners</note>
    </ligand>
</feature>
<feature type="binding site" evidence="3">
    <location>
        <position position="41"/>
    </location>
    <ligand>
        <name>Mg(2+)</name>
        <dbReference type="ChEBI" id="CHEBI:18420"/>
    </ligand>
</feature>
<feature type="binding site" evidence="3">
    <location>
        <position position="41"/>
    </location>
    <ligand>
        <name>substrate</name>
    </ligand>
</feature>
<feature type="binding site" description="in other chain" evidence="3">
    <location>
        <begin position="66"/>
        <end position="69"/>
    </location>
    <ligand>
        <name>IMP</name>
        <dbReference type="ChEBI" id="CHEBI:58053"/>
        <note>ligand shared between dimeric partners</note>
    </ligand>
</feature>
<feature type="binding site" evidence="3">
    <location>
        <begin position="68"/>
        <end position="70"/>
    </location>
    <ligand>
        <name>GTP</name>
        <dbReference type="ChEBI" id="CHEBI:37565"/>
    </ligand>
</feature>
<feature type="binding site" evidence="3">
    <location>
        <position position="68"/>
    </location>
    <ligand>
        <name>Mg(2+)</name>
        <dbReference type="ChEBI" id="CHEBI:18420"/>
    </ligand>
</feature>
<feature type="binding site" description="in other chain" evidence="3">
    <location>
        <position position="163"/>
    </location>
    <ligand>
        <name>IMP</name>
        <dbReference type="ChEBI" id="CHEBI:58053"/>
        <note>ligand shared between dimeric partners</note>
    </ligand>
</feature>
<feature type="binding site" evidence="3">
    <location>
        <position position="177"/>
    </location>
    <ligand>
        <name>IMP</name>
        <dbReference type="ChEBI" id="CHEBI:58053"/>
        <note>ligand shared between dimeric partners</note>
    </ligand>
</feature>
<feature type="binding site" description="in other chain" evidence="3">
    <location>
        <position position="256"/>
    </location>
    <ligand>
        <name>IMP</name>
        <dbReference type="ChEBI" id="CHEBI:58053"/>
        <note>ligand shared between dimeric partners</note>
    </ligand>
</feature>
<feature type="binding site" description="in other chain" evidence="3">
    <location>
        <position position="271"/>
    </location>
    <ligand>
        <name>IMP</name>
        <dbReference type="ChEBI" id="CHEBI:58053"/>
        <note>ligand shared between dimeric partners</note>
    </ligand>
</feature>
<feature type="binding site" evidence="3">
    <location>
        <begin position="331"/>
        <end position="337"/>
    </location>
    <ligand>
        <name>substrate</name>
    </ligand>
</feature>
<feature type="binding site" description="in other chain" evidence="3">
    <location>
        <position position="335"/>
    </location>
    <ligand>
        <name>IMP</name>
        <dbReference type="ChEBI" id="CHEBI:58053"/>
        <note>ligand shared between dimeric partners</note>
    </ligand>
</feature>
<feature type="binding site" evidence="3">
    <location>
        <position position="337"/>
    </location>
    <ligand>
        <name>GTP</name>
        <dbReference type="ChEBI" id="CHEBI:37565"/>
    </ligand>
</feature>
<feature type="binding site" evidence="3">
    <location>
        <begin position="363"/>
        <end position="365"/>
    </location>
    <ligand>
        <name>GTP</name>
        <dbReference type="ChEBI" id="CHEBI:37565"/>
    </ligand>
</feature>
<feature type="binding site" evidence="3">
    <location>
        <begin position="445"/>
        <end position="448"/>
    </location>
    <ligand>
        <name>GTP</name>
        <dbReference type="ChEBI" id="CHEBI:37565"/>
    </ligand>
</feature>
<organism>
    <name type="scientific">Xenopus laevis</name>
    <name type="common">African clawed frog</name>
    <dbReference type="NCBI Taxonomy" id="8355"/>
    <lineage>
        <taxon>Eukaryota</taxon>
        <taxon>Metazoa</taxon>
        <taxon>Chordata</taxon>
        <taxon>Craniata</taxon>
        <taxon>Vertebrata</taxon>
        <taxon>Euteleostomi</taxon>
        <taxon>Amphibia</taxon>
        <taxon>Batrachia</taxon>
        <taxon>Anura</taxon>
        <taxon>Pipoidea</taxon>
        <taxon>Pipidae</taxon>
        <taxon>Xenopodinae</taxon>
        <taxon>Xenopus</taxon>
        <taxon>Xenopus</taxon>
    </lineage>
</organism>
<comment type="function">
    <text evidence="2">Plays an important role in the de novo pathway and in the salvage pathway of purine nucleotide biosynthesis. Catalyzes the first committed step in the biosynthesis of AMP from IMP.</text>
</comment>
<comment type="catalytic activity">
    <reaction evidence="3">
        <text>IMP + L-aspartate + GTP = N(6)-(1,2-dicarboxyethyl)-AMP + GDP + phosphate + 2 H(+)</text>
        <dbReference type="Rhea" id="RHEA:15753"/>
        <dbReference type="ChEBI" id="CHEBI:15378"/>
        <dbReference type="ChEBI" id="CHEBI:29991"/>
        <dbReference type="ChEBI" id="CHEBI:37565"/>
        <dbReference type="ChEBI" id="CHEBI:43474"/>
        <dbReference type="ChEBI" id="CHEBI:57567"/>
        <dbReference type="ChEBI" id="CHEBI:58053"/>
        <dbReference type="ChEBI" id="CHEBI:58189"/>
        <dbReference type="EC" id="6.3.4.4"/>
    </reaction>
</comment>
<comment type="cofactor">
    <cofactor evidence="3">
        <name>Mg(2+)</name>
        <dbReference type="ChEBI" id="CHEBI:18420"/>
    </cofactor>
    <text evidence="3">Binds 1 Mg(2+) ion per subunit.</text>
</comment>
<comment type="activity regulation">
    <text evidence="2">Inhibited competitively by AMP and IMP and non-competitively by fructose 1,6-bisphosphate.</text>
</comment>
<comment type="pathway">
    <text evidence="3">Purine metabolism; AMP biosynthesis via de novo pathway; AMP from IMP: step 1/2.</text>
</comment>
<comment type="subunit">
    <text evidence="3">Homodimer.</text>
</comment>
<comment type="subcellular location">
    <subcellularLocation>
        <location evidence="3">Cytoplasm</location>
    </subcellularLocation>
    <subcellularLocation>
        <location evidence="1">Mitochondrion</location>
    </subcellularLocation>
</comment>
<comment type="similarity">
    <text evidence="3">Belongs to the adenylosuccinate synthetase family.</text>
</comment>
<proteinExistence type="evidence at transcript level"/>
<gene>
    <name type="primary">adss2</name>
    <name type="synonym">adss</name>
</gene>
<accession>Q7ZY87</accession>
<dbReference type="EC" id="6.3.4.4" evidence="3"/>
<dbReference type="EMBL" id="BC043896">
    <property type="protein sequence ID" value="AAH43896.1"/>
    <property type="molecule type" value="mRNA"/>
</dbReference>
<dbReference type="RefSeq" id="NP_001080088.1">
    <property type="nucleotide sequence ID" value="NM_001086619.1"/>
</dbReference>
<dbReference type="RefSeq" id="XP_018097984.1">
    <property type="nucleotide sequence ID" value="XM_018242495.1"/>
</dbReference>
<dbReference type="SMR" id="Q7ZY87"/>
<dbReference type="DNASU" id="379780"/>
<dbReference type="GeneID" id="379780"/>
<dbReference type="KEGG" id="xla:379780"/>
<dbReference type="AGR" id="Xenbase:XB-GENE-944129"/>
<dbReference type="CTD" id="379780"/>
<dbReference type="Xenbase" id="XB-GENE-944129">
    <property type="gene designation" value="adss2.L"/>
</dbReference>
<dbReference type="OrthoDB" id="10265645at2759"/>
<dbReference type="UniPathway" id="UPA00075">
    <property type="reaction ID" value="UER00335"/>
</dbReference>
<dbReference type="CD-CODE" id="78E86D56">
    <property type="entry name" value="Mitochondrial cloud"/>
</dbReference>
<dbReference type="Proteomes" id="UP000186698">
    <property type="component" value="Chromosome 5L"/>
</dbReference>
<dbReference type="Bgee" id="108705604">
    <property type="expression patterns" value="Expressed in zone of skin and 19 other cell types or tissues"/>
</dbReference>
<dbReference type="GO" id="GO:0005737">
    <property type="term" value="C:cytoplasm"/>
    <property type="evidence" value="ECO:0000318"/>
    <property type="project" value="GO_Central"/>
</dbReference>
<dbReference type="GO" id="GO:0005739">
    <property type="term" value="C:mitochondrion"/>
    <property type="evidence" value="ECO:0000250"/>
    <property type="project" value="UniProtKB"/>
</dbReference>
<dbReference type="GO" id="GO:0004019">
    <property type="term" value="F:adenylosuccinate synthase activity"/>
    <property type="evidence" value="ECO:0000318"/>
    <property type="project" value="GO_Central"/>
</dbReference>
<dbReference type="GO" id="GO:0005525">
    <property type="term" value="F:GTP binding"/>
    <property type="evidence" value="ECO:0007669"/>
    <property type="project" value="UniProtKB-UniRule"/>
</dbReference>
<dbReference type="GO" id="GO:0000287">
    <property type="term" value="F:magnesium ion binding"/>
    <property type="evidence" value="ECO:0007669"/>
    <property type="project" value="UniProtKB-UniRule"/>
</dbReference>
<dbReference type="GO" id="GO:0044208">
    <property type="term" value="P:'de novo' AMP biosynthetic process"/>
    <property type="evidence" value="ECO:0000318"/>
    <property type="project" value="GO_Central"/>
</dbReference>
<dbReference type="GO" id="GO:0046040">
    <property type="term" value="P:IMP metabolic process"/>
    <property type="evidence" value="ECO:0000318"/>
    <property type="project" value="GO_Central"/>
</dbReference>
<dbReference type="CDD" id="cd03108">
    <property type="entry name" value="AdSS"/>
    <property type="match status" value="1"/>
</dbReference>
<dbReference type="FunFam" id="3.90.170.10:FF:000001">
    <property type="entry name" value="Adenylosuccinate synthetase"/>
    <property type="match status" value="1"/>
</dbReference>
<dbReference type="FunFam" id="1.10.300.10:FF:000002">
    <property type="entry name" value="Adenylosuccinate synthetase, chloroplastic"/>
    <property type="match status" value="1"/>
</dbReference>
<dbReference type="Gene3D" id="3.40.440.10">
    <property type="entry name" value="Adenylosuccinate Synthetase, subunit A, domain 1"/>
    <property type="match status" value="1"/>
</dbReference>
<dbReference type="Gene3D" id="1.10.300.10">
    <property type="entry name" value="Adenylosuccinate Synthetase, subunit A, domain 2"/>
    <property type="match status" value="1"/>
</dbReference>
<dbReference type="Gene3D" id="3.90.170.10">
    <property type="entry name" value="Adenylosuccinate Synthetase, subunit A, domain 3"/>
    <property type="match status" value="1"/>
</dbReference>
<dbReference type="HAMAP" id="MF_00011">
    <property type="entry name" value="Adenylosucc_synth"/>
    <property type="match status" value="1"/>
</dbReference>
<dbReference type="HAMAP" id="MF_03127">
    <property type="entry name" value="Adenylosucc_synth_vert_acid"/>
    <property type="match status" value="1"/>
</dbReference>
<dbReference type="InterPro" id="IPR018220">
    <property type="entry name" value="Adenylosuccin_syn_GTP-bd"/>
</dbReference>
<dbReference type="InterPro" id="IPR033128">
    <property type="entry name" value="Adenylosuccin_syn_Lys_AS"/>
</dbReference>
<dbReference type="InterPro" id="IPR042109">
    <property type="entry name" value="Adenylosuccinate_synth_dom1"/>
</dbReference>
<dbReference type="InterPro" id="IPR042110">
    <property type="entry name" value="Adenylosuccinate_synth_dom2"/>
</dbReference>
<dbReference type="InterPro" id="IPR042111">
    <property type="entry name" value="Adenylosuccinate_synth_dom3"/>
</dbReference>
<dbReference type="InterPro" id="IPR001114">
    <property type="entry name" value="Adenylosuccinate_synthetase"/>
</dbReference>
<dbReference type="InterPro" id="IPR027529">
    <property type="entry name" value="AdSS_2_vert"/>
</dbReference>
<dbReference type="InterPro" id="IPR027417">
    <property type="entry name" value="P-loop_NTPase"/>
</dbReference>
<dbReference type="NCBIfam" id="NF002223">
    <property type="entry name" value="PRK01117.1"/>
    <property type="match status" value="1"/>
</dbReference>
<dbReference type="NCBIfam" id="TIGR00184">
    <property type="entry name" value="purA"/>
    <property type="match status" value="1"/>
</dbReference>
<dbReference type="PANTHER" id="PTHR11846">
    <property type="entry name" value="ADENYLOSUCCINATE SYNTHETASE"/>
    <property type="match status" value="1"/>
</dbReference>
<dbReference type="PANTHER" id="PTHR11846:SF13">
    <property type="entry name" value="ADENYLOSUCCINATE SYNTHETASE ISOZYME 2"/>
    <property type="match status" value="1"/>
</dbReference>
<dbReference type="Pfam" id="PF00709">
    <property type="entry name" value="Adenylsucc_synt"/>
    <property type="match status" value="1"/>
</dbReference>
<dbReference type="SMART" id="SM00788">
    <property type="entry name" value="Adenylsucc_synt"/>
    <property type="match status" value="1"/>
</dbReference>
<dbReference type="SUPFAM" id="SSF52540">
    <property type="entry name" value="P-loop containing nucleoside triphosphate hydrolases"/>
    <property type="match status" value="1"/>
</dbReference>
<dbReference type="PROSITE" id="PS01266">
    <property type="entry name" value="ADENYLOSUCCIN_SYN_1"/>
    <property type="match status" value="1"/>
</dbReference>
<dbReference type="PROSITE" id="PS00513">
    <property type="entry name" value="ADENYLOSUCCIN_SYN_2"/>
    <property type="match status" value="1"/>
</dbReference>
<name>PURA2_XENLA</name>
<keyword id="KW-0963">Cytoplasm</keyword>
<keyword id="KW-0342">GTP-binding</keyword>
<keyword id="KW-0436">Ligase</keyword>
<keyword id="KW-0460">Magnesium</keyword>
<keyword id="KW-0479">Metal-binding</keyword>
<keyword id="KW-0496">Mitochondrion</keyword>
<keyword id="KW-0547">Nucleotide-binding</keyword>
<keyword id="KW-0658">Purine biosynthesis</keyword>
<keyword id="KW-1185">Reference proteome</keyword>
<reference key="1">
    <citation type="submission" date="2003-01" db="EMBL/GenBank/DDBJ databases">
        <authorList>
            <consortium name="NIH - Xenopus Gene Collection (XGC) project"/>
        </authorList>
    </citation>
    <scope>NUCLEOTIDE SEQUENCE [LARGE SCALE MRNA]</scope>
    <source>
        <tissue>Embryo</tissue>
    </source>
</reference>